<accession>Q3ZZU0</accession>
<proteinExistence type="inferred from homology"/>
<organism>
    <name type="scientific">Dehalococcoides mccartyi (strain CBDB1)</name>
    <dbReference type="NCBI Taxonomy" id="255470"/>
    <lineage>
        <taxon>Bacteria</taxon>
        <taxon>Bacillati</taxon>
        <taxon>Chloroflexota</taxon>
        <taxon>Dehalococcoidia</taxon>
        <taxon>Dehalococcoidales</taxon>
        <taxon>Dehalococcoidaceae</taxon>
        <taxon>Dehalococcoides</taxon>
    </lineage>
</organism>
<name>ATPD_DEHMC</name>
<comment type="function">
    <text evidence="1">F(1)F(0) ATP synthase produces ATP from ADP in the presence of a proton or sodium gradient. F-type ATPases consist of two structural domains, F(1) containing the extramembraneous catalytic core and F(0) containing the membrane proton channel, linked together by a central stalk and a peripheral stalk. During catalysis, ATP synthesis in the catalytic domain of F(1) is coupled via a rotary mechanism of the central stalk subunits to proton translocation.</text>
</comment>
<comment type="function">
    <text evidence="1">This protein is part of the stalk that links CF(0) to CF(1). It either transmits conformational changes from CF(0) to CF(1) or is implicated in proton conduction.</text>
</comment>
<comment type="subunit">
    <text evidence="1">F-type ATPases have 2 components, F(1) - the catalytic core - and F(0) - the membrane proton channel. F(1) has five subunits: alpha(3), beta(3), gamma(1), delta(1), epsilon(1). F(0) has three main subunits: a(1), b(2) and c(10-14). The alpha and beta chains form an alternating ring which encloses part of the gamma chain. F(1) is attached to F(0) by a central stalk formed by the gamma and epsilon chains, while a peripheral stalk is formed by the delta and b chains.</text>
</comment>
<comment type="subcellular location">
    <subcellularLocation>
        <location evidence="1">Cell membrane</location>
        <topology evidence="1">Peripheral membrane protein</topology>
    </subcellularLocation>
</comment>
<comment type="similarity">
    <text evidence="1">Belongs to the ATPase delta chain family.</text>
</comment>
<gene>
    <name evidence="1" type="primary">atpH</name>
    <name type="ordered locus">cbdbA535</name>
</gene>
<sequence>MAKRVYAIAMRYAQALHELAKEQKSLDKWQEDLQNLSRLTEDASVDEFLSNPKIVSARKHAVLAKLSDIDPLMLNLVDMLVATRRLGIMRAISGEYNRLLNEARGVEDAIVTTAKPASEADTEIIRQQLSKITGKKINILTATDPGLIAGLKARIGDKLIDGSISRRLVLLQNEISQGRI</sequence>
<feature type="chain" id="PRO_0000370961" description="ATP synthase subunit delta">
    <location>
        <begin position="1"/>
        <end position="180"/>
    </location>
</feature>
<keyword id="KW-0066">ATP synthesis</keyword>
<keyword id="KW-1003">Cell membrane</keyword>
<keyword id="KW-0139">CF(1)</keyword>
<keyword id="KW-0375">Hydrogen ion transport</keyword>
<keyword id="KW-0406">Ion transport</keyword>
<keyword id="KW-0472">Membrane</keyword>
<keyword id="KW-0813">Transport</keyword>
<reference key="1">
    <citation type="journal article" date="2005" name="Nat. Biotechnol.">
        <title>Genome sequence of the chlorinated compound-respiring bacterium Dehalococcoides species strain CBDB1.</title>
        <authorList>
            <person name="Kube M."/>
            <person name="Beck A."/>
            <person name="Zinder S.H."/>
            <person name="Kuhl H."/>
            <person name="Reinhardt R."/>
            <person name="Adrian L."/>
        </authorList>
    </citation>
    <scope>NUCLEOTIDE SEQUENCE [LARGE SCALE GENOMIC DNA]</scope>
    <source>
        <strain>CBDB1</strain>
    </source>
</reference>
<evidence type="ECO:0000255" key="1">
    <source>
        <dbReference type="HAMAP-Rule" id="MF_01416"/>
    </source>
</evidence>
<protein>
    <recommendedName>
        <fullName evidence="1">ATP synthase subunit delta</fullName>
    </recommendedName>
    <alternativeName>
        <fullName evidence="1">ATP synthase F(1) sector subunit delta</fullName>
    </alternativeName>
    <alternativeName>
        <fullName evidence="1">F-type ATPase subunit delta</fullName>
        <shortName evidence="1">F-ATPase subunit delta</shortName>
    </alternativeName>
</protein>
<dbReference type="EMBL" id="AJ965256">
    <property type="protein sequence ID" value="CAI82723.1"/>
    <property type="molecule type" value="Genomic_DNA"/>
</dbReference>
<dbReference type="RefSeq" id="WP_011309075.1">
    <property type="nucleotide sequence ID" value="NC_007356.1"/>
</dbReference>
<dbReference type="SMR" id="Q3ZZU0"/>
<dbReference type="KEGG" id="deh:cbdbA535"/>
<dbReference type="HOGENOM" id="CLU_085114_4_2_0"/>
<dbReference type="Proteomes" id="UP000000433">
    <property type="component" value="Chromosome"/>
</dbReference>
<dbReference type="GO" id="GO:0005886">
    <property type="term" value="C:plasma membrane"/>
    <property type="evidence" value="ECO:0007669"/>
    <property type="project" value="UniProtKB-SubCell"/>
</dbReference>
<dbReference type="GO" id="GO:0045259">
    <property type="term" value="C:proton-transporting ATP synthase complex"/>
    <property type="evidence" value="ECO:0007669"/>
    <property type="project" value="UniProtKB-KW"/>
</dbReference>
<dbReference type="GO" id="GO:0046933">
    <property type="term" value="F:proton-transporting ATP synthase activity, rotational mechanism"/>
    <property type="evidence" value="ECO:0007669"/>
    <property type="project" value="UniProtKB-UniRule"/>
</dbReference>
<dbReference type="Gene3D" id="1.10.520.20">
    <property type="entry name" value="N-terminal domain of the delta subunit of the F1F0-ATP synthase"/>
    <property type="match status" value="1"/>
</dbReference>
<dbReference type="HAMAP" id="MF_01416">
    <property type="entry name" value="ATP_synth_delta_bact"/>
    <property type="match status" value="1"/>
</dbReference>
<dbReference type="InterPro" id="IPR026015">
    <property type="entry name" value="ATP_synth_OSCP/delta_N_sf"/>
</dbReference>
<dbReference type="InterPro" id="IPR000711">
    <property type="entry name" value="ATPase_OSCP/dsu"/>
</dbReference>
<dbReference type="NCBIfam" id="TIGR01145">
    <property type="entry name" value="ATP_synt_delta"/>
    <property type="match status" value="1"/>
</dbReference>
<dbReference type="PANTHER" id="PTHR11910">
    <property type="entry name" value="ATP SYNTHASE DELTA CHAIN"/>
    <property type="match status" value="1"/>
</dbReference>
<dbReference type="Pfam" id="PF00213">
    <property type="entry name" value="OSCP"/>
    <property type="match status" value="1"/>
</dbReference>
<dbReference type="PRINTS" id="PR00125">
    <property type="entry name" value="ATPASEDELTA"/>
</dbReference>
<dbReference type="SUPFAM" id="SSF47928">
    <property type="entry name" value="N-terminal domain of the delta subunit of the F1F0-ATP synthase"/>
    <property type="match status" value="1"/>
</dbReference>